<comment type="catalytic activity">
    <reaction evidence="1">
        <text>tRNA(Leu) + L-leucine + ATP = L-leucyl-tRNA(Leu) + AMP + diphosphate</text>
        <dbReference type="Rhea" id="RHEA:11688"/>
        <dbReference type="Rhea" id="RHEA-COMP:9613"/>
        <dbReference type="Rhea" id="RHEA-COMP:9622"/>
        <dbReference type="ChEBI" id="CHEBI:30616"/>
        <dbReference type="ChEBI" id="CHEBI:33019"/>
        <dbReference type="ChEBI" id="CHEBI:57427"/>
        <dbReference type="ChEBI" id="CHEBI:78442"/>
        <dbReference type="ChEBI" id="CHEBI:78494"/>
        <dbReference type="ChEBI" id="CHEBI:456215"/>
        <dbReference type="EC" id="6.1.1.4"/>
    </reaction>
</comment>
<comment type="subcellular location">
    <subcellularLocation>
        <location evidence="1">Cytoplasm</location>
    </subcellularLocation>
</comment>
<comment type="similarity">
    <text evidence="1">Belongs to the class-I aminoacyl-tRNA synthetase family.</text>
</comment>
<accession>B7HSS7</accession>
<dbReference type="EC" id="6.1.1.4" evidence="1"/>
<dbReference type="EMBL" id="CP001177">
    <property type="protein sequence ID" value="ACJ79239.1"/>
    <property type="molecule type" value="Genomic_DNA"/>
</dbReference>
<dbReference type="SMR" id="B7HSS7"/>
<dbReference type="KEGG" id="bcr:BCAH187_A4875"/>
<dbReference type="HOGENOM" id="CLU_004427_0_0_9"/>
<dbReference type="Proteomes" id="UP000002214">
    <property type="component" value="Chromosome"/>
</dbReference>
<dbReference type="GO" id="GO:0005829">
    <property type="term" value="C:cytosol"/>
    <property type="evidence" value="ECO:0007669"/>
    <property type="project" value="TreeGrafter"/>
</dbReference>
<dbReference type="GO" id="GO:0002161">
    <property type="term" value="F:aminoacyl-tRNA deacylase activity"/>
    <property type="evidence" value="ECO:0007669"/>
    <property type="project" value="InterPro"/>
</dbReference>
<dbReference type="GO" id="GO:0005524">
    <property type="term" value="F:ATP binding"/>
    <property type="evidence" value="ECO:0007669"/>
    <property type="project" value="UniProtKB-UniRule"/>
</dbReference>
<dbReference type="GO" id="GO:0004823">
    <property type="term" value="F:leucine-tRNA ligase activity"/>
    <property type="evidence" value="ECO:0007669"/>
    <property type="project" value="UniProtKB-UniRule"/>
</dbReference>
<dbReference type="GO" id="GO:0006429">
    <property type="term" value="P:leucyl-tRNA aminoacylation"/>
    <property type="evidence" value="ECO:0007669"/>
    <property type="project" value="UniProtKB-UniRule"/>
</dbReference>
<dbReference type="CDD" id="cd07958">
    <property type="entry name" value="Anticodon_Ia_Leu_BEm"/>
    <property type="match status" value="1"/>
</dbReference>
<dbReference type="CDD" id="cd00812">
    <property type="entry name" value="LeuRS_core"/>
    <property type="match status" value="1"/>
</dbReference>
<dbReference type="FunFam" id="1.10.730.10:FF:000012">
    <property type="entry name" value="Leucine--tRNA ligase"/>
    <property type="match status" value="1"/>
</dbReference>
<dbReference type="FunFam" id="1.10.730.10:FF:000018">
    <property type="entry name" value="Leucine--tRNA ligase"/>
    <property type="match status" value="1"/>
</dbReference>
<dbReference type="FunFam" id="3.10.20.590:FF:000001">
    <property type="entry name" value="Leucine--tRNA ligase"/>
    <property type="match status" value="1"/>
</dbReference>
<dbReference type="FunFam" id="3.40.50.620:FF:000056">
    <property type="entry name" value="Leucine--tRNA ligase"/>
    <property type="match status" value="1"/>
</dbReference>
<dbReference type="FunFam" id="3.40.50.620:FF:000077">
    <property type="entry name" value="Leucine--tRNA ligase"/>
    <property type="match status" value="1"/>
</dbReference>
<dbReference type="Gene3D" id="3.10.20.590">
    <property type="match status" value="1"/>
</dbReference>
<dbReference type="Gene3D" id="3.40.50.620">
    <property type="entry name" value="HUPs"/>
    <property type="match status" value="2"/>
</dbReference>
<dbReference type="Gene3D" id="1.10.730.10">
    <property type="entry name" value="Isoleucyl-tRNA Synthetase, Domain 1"/>
    <property type="match status" value="1"/>
</dbReference>
<dbReference type="HAMAP" id="MF_00049_B">
    <property type="entry name" value="Leu_tRNA_synth_B"/>
    <property type="match status" value="1"/>
</dbReference>
<dbReference type="InterPro" id="IPR001412">
    <property type="entry name" value="aa-tRNA-synth_I_CS"/>
</dbReference>
<dbReference type="InterPro" id="IPR002300">
    <property type="entry name" value="aa-tRNA-synth_Ia"/>
</dbReference>
<dbReference type="InterPro" id="IPR002302">
    <property type="entry name" value="Leu-tRNA-ligase"/>
</dbReference>
<dbReference type="InterPro" id="IPR025709">
    <property type="entry name" value="Leu_tRNA-synth_edit"/>
</dbReference>
<dbReference type="InterPro" id="IPR013155">
    <property type="entry name" value="M/V/L/I-tRNA-synth_anticd-bd"/>
</dbReference>
<dbReference type="InterPro" id="IPR015413">
    <property type="entry name" value="Methionyl/Leucyl_tRNA_Synth"/>
</dbReference>
<dbReference type="InterPro" id="IPR014729">
    <property type="entry name" value="Rossmann-like_a/b/a_fold"/>
</dbReference>
<dbReference type="InterPro" id="IPR009080">
    <property type="entry name" value="tRNAsynth_Ia_anticodon-bd"/>
</dbReference>
<dbReference type="InterPro" id="IPR009008">
    <property type="entry name" value="Val/Leu/Ile-tRNA-synth_edit"/>
</dbReference>
<dbReference type="NCBIfam" id="TIGR00396">
    <property type="entry name" value="leuS_bact"/>
    <property type="match status" value="1"/>
</dbReference>
<dbReference type="PANTHER" id="PTHR43740:SF2">
    <property type="entry name" value="LEUCINE--TRNA LIGASE, MITOCHONDRIAL"/>
    <property type="match status" value="1"/>
</dbReference>
<dbReference type="PANTHER" id="PTHR43740">
    <property type="entry name" value="LEUCYL-TRNA SYNTHETASE"/>
    <property type="match status" value="1"/>
</dbReference>
<dbReference type="Pfam" id="PF08264">
    <property type="entry name" value="Anticodon_1"/>
    <property type="match status" value="1"/>
</dbReference>
<dbReference type="Pfam" id="PF00133">
    <property type="entry name" value="tRNA-synt_1"/>
    <property type="match status" value="1"/>
</dbReference>
<dbReference type="Pfam" id="PF13603">
    <property type="entry name" value="tRNA-synt_1_2"/>
    <property type="match status" value="1"/>
</dbReference>
<dbReference type="Pfam" id="PF09334">
    <property type="entry name" value="tRNA-synt_1g"/>
    <property type="match status" value="1"/>
</dbReference>
<dbReference type="PRINTS" id="PR00985">
    <property type="entry name" value="TRNASYNTHLEU"/>
</dbReference>
<dbReference type="SUPFAM" id="SSF47323">
    <property type="entry name" value="Anticodon-binding domain of a subclass of class I aminoacyl-tRNA synthetases"/>
    <property type="match status" value="1"/>
</dbReference>
<dbReference type="SUPFAM" id="SSF52374">
    <property type="entry name" value="Nucleotidylyl transferase"/>
    <property type="match status" value="1"/>
</dbReference>
<dbReference type="SUPFAM" id="SSF50677">
    <property type="entry name" value="ValRS/IleRS/LeuRS editing domain"/>
    <property type="match status" value="1"/>
</dbReference>
<dbReference type="PROSITE" id="PS00178">
    <property type="entry name" value="AA_TRNA_LIGASE_I"/>
    <property type="match status" value="1"/>
</dbReference>
<evidence type="ECO:0000255" key="1">
    <source>
        <dbReference type="HAMAP-Rule" id="MF_00049"/>
    </source>
</evidence>
<sequence length="802" mass="91359">MSFNHQEIEKKWQGYWEENKTFRTPDETEKPKFYALDMFPYPSGAGLHVGHPEGYTATDILSRMKRMQGYNVLHPMGWDAFGLPAEQYALDTGNSPAEFTEHNINTFRNQIKSLGFSYDWDREVNTTDPNYYKWTQWIFLKLFEKGLAYVDEVPVNWCPALGTVLANEEIIDGKSERGGHPVERRPMRQWMLKITAYGDRLLEDLDELDWPESLKDMQRNWIGRSEGAEVHFNIDGTDEKFTVFTTRPDTLFGASYCVLAPEHALVADITTAEQKEAVEAYINSVKMKSDLERTELAKEKTGVFTGAYAVNPVNGEKLPIWIADYVLATYGTGAVMAVPAHDERDYEFASTFNLPMKEVVKGGDITKEAYTGDGEHVNSAFLDGLNKEEAIAKMIEWLEVTSAGNQKVTYRLRDWLFSRQRYWGEPIPVIHWEDGTMTAVKEEELPLVLPKTDNIRPSGTGESPLANIDEWVNVVDPETGKKGRRETNTMPQWAGSCWYYLRYIDPNNSEALVDPEKVKQWLPVDIYIGGAEHAVLHLLYARFWHKVLYDIGVVPTKEPFQQLFNQGMILGENNEKMSKSKGNVVNPDDIVASHGADTLRLYEMFMGPLDASIAWSENGLDGARRFLDRVWRLFVQDNGELSEKITDAPNKELEKAYHQTVKKVTEDYAELRFNTAISQMMVFINDAYKAETLPKEYVEGFVKMIAPVAPHIGEELWSKLGYNETITYASWPTFDESKLVEDEVEIVVQVMGKVRAKLTMSKDASKEEMEQLALEAIKDQIEGKTVRKVIVVPGKLVNVVAN</sequence>
<protein>
    <recommendedName>
        <fullName evidence="1">Leucine--tRNA ligase</fullName>
        <ecNumber evidence="1">6.1.1.4</ecNumber>
    </recommendedName>
    <alternativeName>
        <fullName evidence="1">Leucyl-tRNA synthetase</fullName>
        <shortName evidence="1">LeuRS</shortName>
    </alternativeName>
</protein>
<gene>
    <name evidence="1" type="primary">leuS</name>
    <name type="ordered locus">BCAH187_A4875</name>
</gene>
<name>SYL_BACC7</name>
<proteinExistence type="inferred from homology"/>
<keyword id="KW-0030">Aminoacyl-tRNA synthetase</keyword>
<keyword id="KW-0067">ATP-binding</keyword>
<keyword id="KW-0963">Cytoplasm</keyword>
<keyword id="KW-0436">Ligase</keyword>
<keyword id="KW-0547">Nucleotide-binding</keyword>
<keyword id="KW-0648">Protein biosynthesis</keyword>
<organism>
    <name type="scientific">Bacillus cereus (strain AH187)</name>
    <dbReference type="NCBI Taxonomy" id="405534"/>
    <lineage>
        <taxon>Bacteria</taxon>
        <taxon>Bacillati</taxon>
        <taxon>Bacillota</taxon>
        <taxon>Bacilli</taxon>
        <taxon>Bacillales</taxon>
        <taxon>Bacillaceae</taxon>
        <taxon>Bacillus</taxon>
        <taxon>Bacillus cereus group</taxon>
    </lineage>
</organism>
<reference key="1">
    <citation type="submission" date="2008-10" db="EMBL/GenBank/DDBJ databases">
        <title>Genome sequence of Bacillus cereus AH187.</title>
        <authorList>
            <person name="Dodson R.J."/>
            <person name="Durkin A.S."/>
            <person name="Rosovitz M.J."/>
            <person name="Rasko D.A."/>
            <person name="Kolsto A.B."/>
            <person name="Okstad O.A."/>
            <person name="Ravel J."/>
            <person name="Sutton G."/>
        </authorList>
    </citation>
    <scope>NUCLEOTIDE SEQUENCE [LARGE SCALE GENOMIC DNA]</scope>
    <source>
        <strain>AH187</strain>
    </source>
</reference>
<feature type="chain" id="PRO_1000199176" description="Leucine--tRNA ligase">
    <location>
        <begin position="1"/>
        <end position="802"/>
    </location>
</feature>
<feature type="short sequence motif" description="'HIGH' region">
    <location>
        <begin position="40"/>
        <end position="51"/>
    </location>
</feature>
<feature type="short sequence motif" description="'KMSKS' region">
    <location>
        <begin position="576"/>
        <end position="580"/>
    </location>
</feature>
<feature type="binding site" evidence="1">
    <location>
        <position position="579"/>
    </location>
    <ligand>
        <name>ATP</name>
        <dbReference type="ChEBI" id="CHEBI:30616"/>
    </ligand>
</feature>